<reference key="1">
    <citation type="journal article" date="2004" name="Nature">
        <title>The DNA sequence and analysis of human chromosome 13.</title>
        <authorList>
            <person name="Dunham A."/>
            <person name="Matthews L.H."/>
            <person name="Burton J."/>
            <person name="Ashurst J.L."/>
            <person name="Howe K.L."/>
            <person name="Ashcroft K.J."/>
            <person name="Beare D.M."/>
            <person name="Burford D.C."/>
            <person name="Hunt S.E."/>
            <person name="Griffiths-Jones S."/>
            <person name="Jones M.C."/>
            <person name="Keenan S.J."/>
            <person name="Oliver K."/>
            <person name="Scott C.E."/>
            <person name="Ainscough R."/>
            <person name="Almeida J.P."/>
            <person name="Ambrose K.D."/>
            <person name="Andrews D.T."/>
            <person name="Ashwell R.I.S."/>
            <person name="Babbage A.K."/>
            <person name="Bagguley C.L."/>
            <person name="Bailey J."/>
            <person name="Bannerjee R."/>
            <person name="Barlow K.F."/>
            <person name="Bates K."/>
            <person name="Beasley H."/>
            <person name="Bird C.P."/>
            <person name="Bray-Allen S."/>
            <person name="Brown A.J."/>
            <person name="Brown J.Y."/>
            <person name="Burrill W."/>
            <person name="Carder C."/>
            <person name="Carter N.P."/>
            <person name="Chapman J.C."/>
            <person name="Clamp M.E."/>
            <person name="Clark S.Y."/>
            <person name="Clarke G."/>
            <person name="Clee C.M."/>
            <person name="Clegg S.C."/>
            <person name="Cobley V."/>
            <person name="Collins J.E."/>
            <person name="Corby N."/>
            <person name="Coville G.J."/>
            <person name="Deloukas P."/>
            <person name="Dhami P."/>
            <person name="Dunham I."/>
            <person name="Dunn M."/>
            <person name="Earthrowl M.E."/>
            <person name="Ellington A.G."/>
            <person name="Faulkner L."/>
            <person name="Frankish A.G."/>
            <person name="Frankland J."/>
            <person name="French L."/>
            <person name="Garner P."/>
            <person name="Garnett J."/>
            <person name="Gilbert J.G.R."/>
            <person name="Gilson C.J."/>
            <person name="Ghori J."/>
            <person name="Grafham D.V."/>
            <person name="Gribble S.M."/>
            <person name="Griffiths C."/>
            <person name="Hall R.E."/>
            <person name="Hammond S."/>
            <person name="Harley J.L."/>
            <person name="Hart E.A."/>
            <person name="Heath P.D."/>
            <person name="Howden P.J."/>
            <person name="Huckle E.J."/>
            <person name="Hunt P.J."/>
            <person name="Hunt A.R."/>
            <person name="Johnson C."/>
            <person name="Johnson D."/>
            <person name="Kay M."/>
            <person name="Kimberley A.M."/>
            <person name="King A."/>
            <person name="Laird G.K."/>
            <person name="Langford C.J."/>
            <person name="Lawlor S."/>
            <person name="Leongamornlert D.A."/>
            <person name="Lloyd D.M."/>
            <person name="Lloyd C."/>
            <person name="Loveland J.E."/>
            <person name="Lovell J."/>
            <person name="Martin S."/>
            <person name="Mashreghi-Mohammadi M."/>
            <person name="McLaren S.J."/>
            <person name="McMurray A."/>
            <person name="Milne S."/>
            <person name="Moore M.J.F."/>
            <person name="Nickerson T."/>
            <person name="Palmer S.A."/>
            <person name="Pearce A.V."/>
            <person name="Peck A.I."/>
            <person name="Pelan S."/>
            <person name="Phillimore B."/>
            <person name="Porter K.M."/>
            <person name="Rice C.M."/>
            <person name="Searle S."/>
            <person name="Sehra H.K."/>
            <person name="Shownkeen R."/>
            <person name="Skuce C.D."/>
            <person name="Smith M."/>
            <person name="Steward C.A."/>
            <person name="Sycamore N."/>
            <person name="Tester J."/>
            <person name="Thomas D.W."/>
            <person name="Tracey A."/>
            <person name="Tromans A."/>
            <person name="Tubby B."/>
            <person name="Wall M."/>
            <person name="Wallis J.M."/>
            <person name="West A.P."/>
            <person name="Whitehead S.L."/>
            <person name="Willey D.L."/>
            <person name="Wilming L."/>
            <person name="Wray P.W."/>
            <person name="Wright M.W."/>
            <person name="Young L."/>
            <person name="Coulson A."/>
            <person name="Durbin R.M."/>
            <person name="Hubbard T."/>
            <person name="Sulston J.E."/>
            <person name="Beck S."/>
            <person name="Bentley D.R."/>
            <person name="Rogers J."/>
            <person name="Ross M.T."/>
        </authorList>
    </citation>
    <scope>NUCLEOTIDE SEQUENCE [LARGE SCALE GENOMIC DNA]</scope>
</reference>
<reference key="2">
    <citation type="submission" date="2005-07" db="EMBL/GenBank/DDBJ databases">
        <authorList>
            <person name="Mural R.J."/>
            <person name="Istrail S."/>
            <person name="Sutton G.G."/>
            <person name="Florea L."/>
            <person name="Halpern A.L."/>
            <person name="Mobarry C.M."/>
            <person name="Lippert R."/>
            <person name="Walenz B."/>
            <person name="Shatkay H."/>
            <person name="Dew I."/>
            <person name="Miller J.R."/>
            <person name="Flanigan M.J."/>
            <person name="Edwards N.J."/>
            <person name="Bolanos R."/>
            <person name="Fasulo D."/>
            <person name="Halldorsson B.V."/>
            <person name="Hannenhalli S."/>
            <person name="Turner R."/>
            <person name="Yooseph S."/>
            <person name="Lu F."/>
            <person name="Nusskern D.R."/>
            <person name="Shue B.C."/>
            <person name="Zheng X.H."/>
            <person name="Zhong F."/>
            <person name="Delcher A.L."/>
            <person name="Huson D.H."/>
            <person name="Kravitz S.A."/>
            <person name="Mouchard L."/>
            <person name="Reinert K."/>
            <person name="Remington K.A."/>
            <person name="Clark A.G."/>
            <person name="Waterman M.S."/>
            <person name="Eichler E.E."/>
            <person name="Adams M.D."/>
            <person name="Hunkapiller M.W."/>
            <person name="Myers E.W."/>
            <person name="Venter J.C."/>
        </authorList>
    </citation>
    <scope>NUCLEOTIDE SEQUENCE [LARGE SCALE GENOMIC DNA]</scope>
</reference>
<reference key="3">
    <citation type="journal article" date="2004" name="Genome Res.">
        <title>The status, quality, and expansion of the NIH full-length cDNA project: the Mammalian Gene Collection (MGC).</title>
        <authorList>
            <consortium name="The MGC Project Team"/>
        </authorList>
    </citation>
    <scope>NUCLEOTIDE SEQUENCE [LARGE SCALE MRNA]</scope>
    <source>
        <tissue>Cervix</tissue>
    </source>
</reference>
<feature type="chain" id="PRO_0000318960" description="Small integral membrane protein 2">
    <location>
        <begin position="1"/>
        <end position="85"/>
    </location>
</feature>
<feature type="transmembrane region" description="Helical" evidence="1">
    <location>
        <begin position="21"/>
        <end position="43"/>
    </location>
</feature>
<feature type="region of interest" description="Disordered" evidence="2">
    <location>
        <begin position="51"/>
        <end position="85"/>
    </location>
</feature>
<name>SMIM2_HUMAN</name>
<sequence>MEAGERIDASQLPHRVLETRGHAISILFGFWTSFICDTYIVLAWISKIKGSPDVSASSDEPYARIQQSRRQCHAEEDQSQVPEAG</sequence>
<organism>
    <name type="scientific">Homo sapiens</name>
    <name type="common">Human</name>
    <dbReference type="NCBI Taxonomy" id="9606"/>
    <lineage>
        <taxon>Eukaryota</taxon>
        <taxon>Metazoa</taxon>
        <taxon>Chordata</taxon>
        <taxon>Craniata</taxon>
        <taxon>Vertebrata</taxon>
        <taxon>Euteleostomi</taxon>
        <taxon>Mammalia</taxon>
        <taxon>Eutheria</taxon>
        <taxon>Euarchontoglires</taxon>
        <taxon>Primates</taxon>
        <taxon>Haplorrhini</taxon>
        <taxon>Catarrhini</taxon>
        <taxon>Hominidae</taxon>
        <taxon>Homo</taxon>
    </lineage>
</organism>
<protein>
    <recommendedName>
        <fullName>Small integral membrane protein 2</fullName>
    </recommendedName>
</protein>
<evidence type="ECO:0000255" key="1"/>
<evidence type="ECO:0000256" key="2">
    <source>
        <dbReference type="SAM" id="MobiDB-lite"/>
    </source>
</evidence>
<evidence type="ECO:0000305" key="3"/>
<accession>Q9BVW6</accession>
<accession>Q5SZS7</accession>
<proteinExistence type="evidence at protein level"/>
<dbReference type="EMBL" id="AL589745">
    <property type="status" value="NOT_ANNOTATED_CDS"/>
    <property type="molecule type" value="Genomic_DNA"/>
</dbReference>
<dbReference type="EMBL" id="CH471075">
    <property type="protein sequence ID" value="EAX08705.1"/>
    <property type="molecule type" value="Genomic_DNA"/>
</dbReference>
<dbReference type="EMBL" id="BC000868">
    <property type="protein sequence ID" value="AAH00868.1"/>
    <property type="molecule type" value="mRNA"/>
</dbReference>
<dbReference type="RefSeq" id="NP_076963.1">
    <property type="nucleotide sequence ID" value="NM_024058.2"/>
</dbReference>
<dbReference type="BioGRID" id="122492">
    <property type="interactions" value="2"/>
</dbReference>
<dbReference type="IntAct" id="Q9BVW6">
    <property type="interactions" value="2"/>
</dbReference>
<dbReference type="STRING" id="9606.ENSP00000383270"/>
<dbReference type="TCDB" id="1.A.124.1.1">
    <property type="family name" value="the small mitochondrial integral membrane protein (smim) family"/>
</dbReference>
<dbReference type="iPTMnet" id="Q9BVW6"/>
<dbReference type="PhosphoSitePlus" id="Q9BVW6"/>
<dbReference type="BioMuta" id="SMIM2"/>
<dbReference type="PaxDb" id="9606-ENSP00000383270"/>
<dbReference type="PeptideAtlas" id="Q9BVW6"/>
<dbReference type="Antibodypedia" id="23547">
    <property type="antibodies" value="8 antibodies from 6 providers"/>
</dbReference>
<dbReference type="DNASU" id="79024"/>
<dbReference type="UCSC" id="uc001uzh.3">
    <property type="organism name" value="human"/>
</dbReference>
<dbReference type="AGR" id="HGNC:28776"/>
<dbReference type="GeneCards" id="SMIM2"/>
<dbReference type="HGNC" id="HGNC:28776">
    <property type="gene designation" value="SMIM2"/>
</dbReference>
<dbReference type="HPA" id="ENSG00000139656">
    <property type="expression patterns" value="Tissue enriched (testis)"/>
</dbReference>
<dbReference type="neXtProt" id="NX_Q9BVW6"/>
<dbReference type="VEuPathDB" id="HostDB:ENSG00000139656"/>
<dbReference type="eggNOG" id="ENOG502TFJG">
    <property type="taxonomic scope" value="Eukaryota"/>
</dbReference>
<dbReference type="HOGENOM" id="CLU_2512005_0_0_1"/>
<dbReference type="InParanoid" id="Q9BVW6"/>
<dbReference type="OMA" id="DEPHARI"/>
<dbReference type="OrthoDB" id="9607954at2759"/>
<dbReference type="PAN-GO" id="Q9BVW6">
    <property type="GO annotations" value="0 GO annotations based on evolutionary models"/>
</dbReference>
<dbReference type="PhylomeDB" id="Q9BVW6"/>
<dbReference type="TreeFam" id="TF340934"/>
<dbReference type="PathwayCommons" id="Q9BVW6"/>
<dbReference type="SignaLink" id="Q9BVW6"/>
<dbReference type="BioGRID-ORCS" id="79024">
    <property type="hits" value="5 hits in 990 CRISPR screens"/>
</dbReference>
<dbReference type="Pharos" id="Q9BVW6">
    <property type="development level" value="Tdark"/>
</dbReference>
<dbReference type="PRO" id="PR:Q9BVW6"/>
<dbReference type="Proteomes" id="UP000005640">
    <property type="component" value="Chromosome 13"/>
</dbReference>
<dbReference type="RNAct" id="Q9BVW6">
    <property type="molecule type" value="protein"/>
</dbReference>
<dbReference type="Bgee" id="ENSG00000139656">
    <property type="expression patterns" value="Expressed in left testis and 106 other cell types or tissues"/>
</dbReference>
<dbReference type="GO" id="GO:0016020">
    <property type="term" value="C:membrane"/>
    <property type="evidence" value="ECO:0007669"/>
    <property type="project" value="UniProtKB-SubCell"/>
</dbReference>
<keyword id="KW-0472">Membrane</keyword>
<keyword id="KW-1185">Reference proteome</keyword>
<keyword id="KW-0812">Transmembrane</keyword>
<keyword id="KW-1133">Transmembrane helix</keyword>
<comment type="interaction">
    <interactant intactId="EBI-10300146">
        <id>Q9BVW6</id>
    </interactant>
    <interactant intactId="EBI-741480">
        <id>Q9UMX0</id>
        <label>UBQLN1</label>
    </interactant>
    <organismsDiffer>false</organismsDiffer>
    <experiments>3</experiments>
</comment>
<comment type="interaction">
    <interactant intactId="EBI-10300146">
        <id>Q9BVW6</id>
    </interactant>
    <interactant intactId="EBI-10173939">
        <id>Q9UMX0-2</id>
        <label>UBQLN1</label>
    </interactant>
    <organismsDiffer>false</organismsDiffer>
    <experiments>3</experiments>
</comment>
<comment type="interaction">
    <interactant intactId="EBI-10300146">
        <id>Q9BVW6</id>
    </interactant>
    <interactant intactId="EBI-947187">
        <id>Q9UHD9</id>
        <label>UBQLN2</label>
    </interactant>
    <organismsDiffer>false</organismsDiffer>
    <experiments>3</experiments>
</comment>
<comment type="subcellular location">
    <subcellularLocation>
        <location evidence="3">Membrane</location>
        <topology evidence="3">Single-pass membrane protein</topology>
    </subcellularLocation>
</comment>
<gene>
    <name type="primary">SMIM2</name>
    <name type="synonym">C13orf44</name>
</gene>